<accession>Q6DIP1</accession>
<sequence>MAKVQILNMVVLDNPCPFHNPFQFEITFECIEDLPDDLEWKIIYVGSAESEEYDQVLDSVLVGPVPAGRHMFVFQADAPNSSLIPESDAVGVTVVLITCTYRGQEFIRVGYYVNNEYSDPELRENPPLKPHFGQLQRNILASNPRVTRFHINWECASEAKMEDIENVDPASNAMLPPNCAPSKGLAAALNPIPENSMDCM</sequence>
<feature type="chain" id="PRO_0000284022" description="Histone chaperone asf1b">
    <location>
        <begin position="1"/>
        <end position="200"/>
    </location>
</feature>
<keyword id="KW-0143">Chaperone</keyword>
<keyword id="KW-0156">Chromatin regulator</keyword>
<keyword id="KW-0539">Nucleus</keyword>
<keyword id="KW-1185">Reference proteome</keyword>
<keyword id="KW-0804">Transcription</keyword>
<keyword id="KW-0805">Transcription regulation</keyword>
<proteinExistence type="evidence at transcript level"/>
<dbReference type="EMBL" id="CR848421">
    <property type="protein sequence ID" value="CAJ81318.1"/>
    <property type="molecule type" value="mRNA"/>
</dbReference>
<dbReference type="EMBL" id="BC075495">
    <property type="protein sequence ID" value="AAH75495.1"/>
    <property type="molecule type" value="mRNA"/>
</dbReference>
<dbReference type="RefSeq" id="NP_001004974.1">
    <property type="nucleotide sequence ID" value="NM_001004974.1"/>
</dbReference>
<dbReference type="SMR" id="Q6DIP1"/>
<dbReference type="FunCoup" id="Q6DIP1">
    <property type="interactions" value="1964"/>
</dbReference>
<dbReference type="STRING" id="8364.ENSXETP00000030742"/>
<dbReference type="PaxDb" id="8364-ENSXETP00000028124"/>
<dbReference type="DNASU" id="448404"/>
<dbReference type="GeneID" id="448404"/>
<dbReference type="KEGG" id="xtr:448404"/>
<dbReference type="AGR" id="Xenbase:XB-GENE-1003005"/>
<dbReference type="CTD" id="55723"/>
<dbReference type="Xenbase" id="XB-GENE-1003005">
    <property type="gene designation" value="asf1b"/>
</dbReference>
<dbReference type="eggNOG" id="KOG3265">
    <property type="taxonomic scope" value="Eukaryota"/>
</dbReference>
<dbReference type="HOGENOM" id="CLU_060354_1_2_1"/>
<dbReference type="InParanoid" id="Q6DIP1"/>
<dbReference type="OMA" id="SSNCAYI"/>
<dbReference type="OrthoDB" id="29755at2759"/>
<dbReference type="PhylomeDB" id="Q6DIP1"/>
<dbReference type="TreeFam" id="TF106429"/>
<dbReference type="Proteomes" id="UP000008143">
    <property type="component" value="Chromosome 3"/>
</dbReference>
<dbReference type="Bgee" id="ENSXETG00000028029">
    <property type="expression patterns" value="Expressed in egg cell and 13 other cell types or tissues"/>
</dbReference>
<dbReference type="GO" id="GO:0005634">
    <property type="term" value="C:nucleus"/>
    <property type="evidence" value="ECO:0007669"/>
    <property type="project" value="UniProtKB-SubCell"/>
</dbReference>
<dbReference type="GO" id="GO:0006325">
    <property type="term" value="P:chromatin organization"/>
    <property type="evidence" value="ECO:0007669"/>
    <property type="project" value="UniProtKB-KW"/>
</dbReference>
<dbReference type="FunFam" id="2.60.40.1490:FF:000001">
    <property type="entry name" value="Histone chaperone ASF1"/>
    <property type="match status" value="1"/>
</dbReference>
<dbReference type="Gene3D" id="2.60.40.1490">
    <property type="entry name" value="Histone chaperone ASF1-like"/>
    <property type="match status" value="1"/>
</dbReference>
<dbReference type="InterPro" id="IPR006818">
    <property type="entry name" value="ASF1-like"/>
</dbReference>
<dbReference type="InterPro" id="IPR036747">
    <property type="entry name" value="ASF1-like_sf"/>
</dbReference>
<dbReference type="PANTHER" id="PTHR12040">
    <property type="entry name" value="ANTI-SILENCING PROTEIN 1"/>
    <property type="match status" value="1"/>
</dbReference>
<dbReference type="PANTHER" id="PTHR12040:SF22">
    <property type="entry name" value="HISTONE CHAPERONE ASF1B"/>
    <property type="match status" value="1"/>
</dbReference>
<dbReference type="Pfam" id="PF04729">
    <property type="entry name" value="ASF1_hist_chap"/>
    <property type="match status" value="1"/>
</dbReference>
<dbReference type="SUPFAM" id="SSF101546">
    <property type="entry name" value="ASF1-like"/>
    <property type="match status" value="1"/>
</dbReference>
<gene>
    <name type="primary">asf1b</name>
    <name type="ORF">TEgg144p13.1</name>
</gene>
<evidence type="ECO:0000250" key="1"/>
<evidence type="ECO:0000305" key="2"/>
<name>ASF1B_XENTR</name>
<reference key="1">
    <citation type="submission" date="2006-10" db="EMBL/GenBank/DDBJ databases">
        <authorList>
            <consortium name="Sanger Xenopus tropicalis EST/cDNA project"/>
        </authorList>
    </citation>
    <scope>NUCLEOTIDE SEQUENCE [LARGE SCALE MRNA]</scope>
    <source>
        <tissue>Egg</tissue>
    </source>
</reference>
<reference key="2">
    <citation type="submission" date="2004-06" db="EMBL/GenBank/DDBJ databases">
        <authorList>
            <consortium name="NIH - Xenopus Gene Collection (XGC) project"/>
        </authorList>
    </citation>
    <scope>NUCLEOTIDE SEQUENCE [LARGE SCALE MRNA]</scope>
    <source>
        <tissue>Gastrula</tissue>
    </source>
</reference>
<comment type="function">
    <text evidence="1">Histone chaperone that facilitates histone deposition and histone exchange and removal during nucleosome assembly and disassembly.</text>
</comment>
<comment type="subunit">
    <text evidence="1">Interacts with histone H3 and histone H4.</text>
</comment>
<comment type="subcellular location">
    <subcellularLocation>
        <location evidence="1">Nucleus</location>
    </subcellularLocation>
</comment>
<comment type="similarity">
    <text evidence="2">Belongs to the ASF1 family.</text>
</comment>
<protein>
    <recommendedName>
        <fullName>Histone chaperone asf1b</fullName>
    </recommendedName>
    <alternativeName>
        <fullName>Anti-silencing function protein 1 homolog B</fullName>
    </alternativeName>
</protein>
<organism>
    <name type="scientific">Xenopus tropicalis</name>
    <name type="common">Western clawed frog</name>
    <name type="synonym">Silurana tropicalis</name>
    <dbReference type="NCBI Taxonomy" id="8364"/>
    <lineage>
        <taxon>Eukaryota</taxon>
        <taxon>Metazoa</taxon>
        <taxon>Chordata</taxon>
        <taxon>Craniata</taxon>
        <taxon>Vertebrata</taxon>
        <taxon>Euteleostomi</taxon>
        <taxon>Amphibia</taxon>
        <taxon>Batrachia</taxon>
        <taxon>Anura</taxon>
        <taxon>Pipoidea</taxon>
        <taxon>Pipidae</taxon>
        <taxon>Xenopodinae</taxon>
        <taxon>Xenopus</taxon>
        <taxon>Silurana</taxon>
    </lineage>
</organism>